<keyword id="KW-1015">Disulfide bond</keyword>
<keyword id="KW-0325">Glycoprotein</keyword>
<keyword id="KW-0328">Glycosyltransferase</keyword>
<keyword id="KW-0333">Golgi apparatus</keyword>
<keyword id="KW-0472">Membrane</keyword>
<keyword id="KW-1185">Reference proteome</keyword>
<keyword id="KW-0964">Secreted</keyword>
<keyword id="KW-0735">Signal-anchor</keyword>
<keyword id="KW-0808">Transferase</keyword>
<keyword id="KW-0812">Transmembrane</keyword>
<keyword id="KW-1133">Transmembrane helix</keyword>
<organism>
    <name type="scientific">Pan troglodytes</name>
    <name type="common">Chimpanzee</name>
    <dbReference type="NCBI Taxonomy" id="9598"/>
    <lineage>
        <taxon>Eukaryota</taxon>
        <taxon>Metazoa</taxon>
        <taxon>Chordata</taxon>
        <taxon>Craniata</taxon>
        <taxon>Vertebrata</taxon>
        <taxon>Euteleostomi</taxon>
        <taxon>Mammalia</taxon>
        <taxon>Eutheria</taxon>
        <taxon>Euarchontoglires</taxon>
        <taxon>Primates</taxon>
        <taxon>Haplorrhini</taxon>
        <taxon>Catarrhini</taxon>
        <taxon>Hominidae</taxon>
        <taxon>Pan</taxon>
    </lineage>
</organism>
<protein>
    <recommendedName>
        <fullName>CMP-N-acetylneuraminate-poly-alpha-2,8-sialyltransferase</fullName>
        <ecNumber>2.4.99.-</ecNumber>
    </recommendedName>
    <alternativeName>
        <fullName>Alpha-2,8-sialyltransferase 8D</fullName>
    </alternativeName>
    <alternativeName>
        <fullName>Polysialyltransferase-1</fullName>
    </alternativeName>
    <alternativeName>
        <fullName>Sialyltransferase 8D</fullName>
        <shortName>SIAT8-D</shortName>
    </alternativeName>
    <alternativeName>
        <fullName>Sialyltransferase St8Sia IV</fullName>
        <shortName>ST8SiaIV</shortName>
    </alternativeName>
</protein>
<gene>
    <name type="primary">ST8SIA4</name>
    <name type="synonym">SIAT8D</name>
</gene>
<feature type="chain" id="PRO_0000149295" description="CMP-N-acetylneuraminate-poly-alpha-2,8-sialyltransferase">
    <location>
        <begin position="1"/>
        <end position="359"/>
    </location>
</feature>
<feature type="topological domain" description="Cytoplasmic" evidence="3">
    <location>
        <begin position="1"/>
        <end position="7"/>
    </location>
</feature>
<feature type="transmembrane region" description="Helical; Signal-anchor for type II membrane protein" evidence="3">
    <location>
        <begin position="8"/>
        <end position="20"/>
    </location>
</feature>
<feature type="topological domain" description="Lumenal" evidence="3">
    <location>
        <begin position="21"/>
        <end position="359"/>
    </location>
</feature>
<feature type="active site" description="Proton donor/acceptor" evidence="1">
    <location>
        <position position="331"/>
    </location>
</feature>
<feature type="binding site" evidence="1">
    <location>
        <position position="147"/>
    </location>
    <ligand>
        <name>CMP-N-acetyl-beta-neuraminate</name>
        <dbReference type="ChEBI" id="CHEBI:57812"/>
    </ligand>
</feature>
<feature type="binding site" evidence="1">
    <location>
        <position position="170"/>
    </location>
    <ligand>
        <name>CMP-N-acetyl-beta-neuraminate</name>
        <dbReference type="ChEBI" id="CHEBI:57812"/>
    </ligand>
</feature>
<feature type="binding site" evidence="1">
    <location>
        <position position="279"/>
    </location>
    <ligand>
        <name>CMP-N-acetyl-beta-neuraminate</name>
        <dbReference type="ChEBI" id="CHEBI:57812"/>
    </ligand>
</feature>
<feature type="binding site" evidence="1">
    <location>
        <position position="280"/>
    </location>
    <ligand>
        <name>CMP-N-acetyl-beta-neuraminate</name>
        <dbReference type="ChEBI" id="CHEBI:57812"/>
    </ligand>
</feature>
<feature type="binding site" evidence="1">
    <location>
        <position position="281"/>
    </location>
    <ligand>
        <name>CMP-N-acetyl-beta-neuraminate</name>
        <dbReference type="ChEBI" id="CHEBI:57812"/>
    </ligand>
</feature>
<feature type="binding site" evidence="1">
    <location>
        <position position="301"/>
    </location>
    <ligand>
        <name>CMP-N-acetyl-beta-neuraminate</name>
        <dbReference type="ChEBI" id="CHEBI:57812"/>
    </ligand>
</feature>
<feature type="glycosylation site" description="N-linked (GlcNAc...) asparagine" evidence="3">
    <location>
        <position position="50"/>
    </location>
</feature>
<feature type="glycosylation site" description="N-linked (GlcNAc...) asparagine" evidence="3">
    <location>
        <position position="74"/>
    </location>
</feature>
<feature type="glycosylation site" description="N-linked (GlcNAc...) asparagine" evidence="3">
    <location>
        <position position="119"/>
    </location>
</feature>
<feature type="glycosylation site" description="N-linked (GlcNAc...) asparagine" evidence="3">
    <location>
        <position position="204"/>
    </location>
</feature>
<feature type="glycosylation site" description="N-linked (GlcNAc...) asparagine" evidence="3">
    <location>
        <position position="219"/>
    </location>
</feature>
<feature type="disulfide bond" evidence="1">
    <location>
        <begin position="142"/>
        <end position="292"/>
    </location>
</feature>
<feature type="disulfide bond" evidence="1">
    <location>
        <begin position="156"/>
        <end position="356"/>
    </location>
</feature>
<accession>P61645</accession>
<evidence type="ECO:0000250" key="1">
    <source>
        <dbReference type="UniProtKB" id="O43173"/>
    </source>
</evidence>
<evidence type="ECO:0000250" key="2">
    <source>
        <dbReference type="UniProtKB" id="Q92187"/>
    </source>
</evidence>
<evidence type="ECO:0000255" key="3"/>
<evidence type="ECO:0000305" key="4"/>
<proteinExistence type="evidence at transcript level"/>
<reference key="1">
    <citation type="journal article" date="2005" name="Glycobiology">
        <title>The animal sialyltransferases and sialyltransferase-related genes: a phylogenetic approach.</title>
        <authorList>
            <person name="Harduin-Lepers A."/>
            <person name="Mollicone R."/>
            <person name="Delannoy P."/>
            <person name="Oriol R."/>
        </authorList>
    </citation>
    <scope>NUCLEOTIDE SEQUENCE [MRNA]</scope>
</reference>
<sequence length="359" mass="41295">MRSIRKRWTICTISLLLIFYKTKEIARTEEHQETQLIGDGELSLSRSLVNSSDKIIRKAGSSIFQHNVEGWKINSSLVLEIRKNILRFLDAERDVSVVKSSFKPGDVIHYVLDRRRTLNISHDLHSLLPEVSPMKNRRFKTCAVVGNSGILLDSECGKEIDSHNFVIRCNLAPVVEFAADVGTKSDFITMNPSVVQRAFGGFRNESDREKFVHRLSMLNDSVLWIPAFMVKGGEKHVEWVNALILKNKLKVRTAYPSLRLIHAVRGYWLTNKVPIKRPSTGLLMYTLATRFCDEIHLYGFWPFPKDLNGKAVKYHYYDDLKYRYFSNASPHRMPLEFKTLNVLHNRGALKLTTGKCVKQ</sequence>
<dbReference type="EC" id="2.4.99.-"/>
<dbReference type="EMBL" id="AJ697661">
    <property type="protein sequence ID" value="CAG26899.1"/>
    <property type="molecule type" value="mRNA"/>
</dbReference>
<dbReference type="RefSeq" id="NP_001032379.1">
    <property type="nucleotide sequence ID" value="NM_001037302.1"/>
</dbReference>
<dbReference type="SMR" id="P61645"/>
<dbReference type="FunCoup" id="P61645">
    <property type="interactions" value="449"/>
</dbReference>
<dbReference type="STRING" id="9598.ENSPTRP00000091792"/>
<dbReference type="CAZy" id="GT29">
    <property type="family name" value="Glycosyltransferase Family 29"/>
</dbReference>
<dbReference type="GlyCosmos" id="P61645">
    <property type="glycosylation" value="5 sites, No reported glycans"/>
</dbReference>
<dbReference type="PaxDb" id="9598-ENSPTRP00000029282"/>
<dbReference type="Ensembl" id="ENSPTRT00000104834.1">
    <property type="protein sequence ID" value="ENSPTRP00000091792.1"/>
    <property type="gene ID" value="ENSPTRG00000042921.1"/>
</dbReference>
<dbReference type="GeneID" id="461971"/>
<dbReference type="KEGG" id="ptr:461971"/>
<dbReference type="CTD" id="7903"/>
<dbReference type="VGNC" id="VGNC:13603">
    <property type="gene designation" value="ST8SIA4"/>
</dbReference>
<dbReference type="eggNOG" id="KOG2692">
    <property type="taxonomic scope" value="Eukaryota"/>
</dbReference>
<dbReference type="GeneTree" id="ENSGT01030000234535"/>
<dbReference type="HOGENOM" id="CLU_048583_3_0_1"/>
<dbReference type="InParanoid" id="P61645"/>
<dbReference type="OMA" id="HAAEGWK"/>
<dbReference type="OrthoDB" id="7474at9604"/>
<dbReference type="TreeFam" id="TF352820"/>
<dbReference type="Proteomes" id="UP000002277">
    <property type="component" value="Chromosome 5"/>
</dbReference>
<dbReference type="Bgee" id="ENSPTRG00000042921">
    <property type="expression patterns" value="Expressed in lymph node and 17 other cell types or tissues"/>
</dbReference>
<dbReference type="GO" id="GO:0005576">
    <property type="term" value="C:extracellular region"/>
    <property type="evidence" value="ECO:0007669"/>
    <property type="project" value="UniProtKB-SubCell"/>
</dbReference>
<dbReference type="GO" id="GO:0000139">
    <property type="term" value="C:Golgi membrane"/>
    <property type="evidence" value="ECO:0007669"/>
    <property type="project" value="UniProtKB-SubCell"/>
</dbReference>
<dbReference type="GO" id="GO:0003828">
    <property type="term" value="F:alpha-N-acetylneuraminate alpha-2,8-sialyltransferase activity"/>
    <property type="evidence" value="ECO:0000318"/>
    <property type="project" value="GO_Central"/>
</dbReference>
<dbReference type="GO" id="GO:0008373">
    <property type="term" value="F:sialyltransferase activity"/>
    <property type="evidence" value="ECO:0000250"/>
    <property type="project" value="UniProtKB"/>
</dbReference>
<dbReference type="GO" id="GO:0001574">
    <property type="term" value="P:ganglioside biosynthetic process"/>
    <property type="evidence" value="ECO:0007669"/>
    <property type="project" value="Ensembl"/>
</dbReference>
<dbReference type="GO" id="GO:0006491">
    <property type="term" value="P:N-glycan processing"/>
    <property type="evidence" value="ECO:0000318"/>
    <property type="project" value="GO_Central"/>
</dbReference>
<dbReference type="GO" id="GO:0009311">
    <property type="term" value="P:oligosaccharide metabolic process"/>
    <property type="evidence" value="ECO:0000318"/>
    <property type="project" value="GO_Central"/>
</dbReference>
<dbReference type="GO" id="GO:0006486">
    <property type="term" value="P:protein glycosylation"/>
    <property type="evidence" value="ECO:0000318"/>
    <property type="project" value="GO_Central"/>
</dbReference>
<dbReference type="GO" id="GO:0097503">
    <property type="term" value="P:sialylation"/>
    <property type="evidence" value="ECO:0000250"/>
    <property type="project" value="UniProtKB"/>
</dbReference>
<dbReference type="CDD" id="cd23988">
    <property type="entry name" value="GT29_ST8SIA4"/>
    <property type="match status" value="1"/>
</dbReference>
<dbReference type="FunFam" id="3.90.1480.20:FF:000001">
    <property type="entry name" value="ST8 alpha-N-acetyl-neuraminide alpha-2,8-sialyltransferase 2"/>
    <property type="match status" value="1"/>
</dbReference>
<dbReference type="Gene3D" id="3.90.1480.20">
    <property type="entry name" value="Glycosyl transferase family 29"/>
    <property type="match status" value="1"/>
</dbReference>
<dbReference type="InterPro" id="IPR001675">
    <property type="entry name" value="Glyco_trans_29"/>
</dbReference>
<dbReference type="InterPro" id="IPR050943">
    <property type="entry name" value="Glycosyltr_29_Sialyltrsf"/>
</dbReference>
<dbReference type="InterPro" id="IPR038578">
    <property type="entry name" value="GT29-like_sf"/>
</dbReference>
<dbReference type="InterPro" id="IPR012163">
    <property type="entry name" value="Sialyl_trans"/>
</dbReference>
<dbReference type="PANTHER" id="PTHR11987">
    <property type="entry name" value="ALPHA-2,8-SIALYLTRANSFERASE"/>
    <property type="match status" value="1"/>
</dbReference>
<dbReference type="PANTHER" id="PTHR11987:SF48">
    <property type="entry name" value="CMP-N-ACETYLNEURAMINATE-POLY-ALPHA-2,8-SIALYLTRANSFERASE"/>
    <property type="match status" value="1"/>
</dbReference>
<dbReference type="Pfam" id="PF00777">
    <property type="entry name" value="Glyco_transf_29"/>
    <property type="match status" value="1"/>
</dbReference>
<dbReference type="PIRSF" id="PIRSF005557">
    <property type="entry name" value="Sialyl_trans"/>
    <property type="match status" value="1"/>
</dbReference>
<name>SIA8D_PANTR</name>
<comment type="function">
    <text evidence="2">Catalyzes the transfer of a sialic acid from a CMP-linked sialic acid donor onto a terminal alpha-2,3-, alpha-2,6-, or alpha-2,8-linked sialic acid of an N-linked glycan protein acceptor through alpha-2,8-linkages. Therefore, participates in polysialic acid synthesis on various sialylated N-acetyllactosaminyl oligosaccharides, including NCAM1 N-glycans, FETUB N-glycans and AHSG. It is noteworthy that alpha-2,3-linked sialic acid is apparently a better acceptor than alpha-2,6-linked sialic acid.</text>
</comment>
<comment type="catalytic activity">
    <reaction evidence="2">
        <text>[N-acetyl-alpha-D-neuraminosyl-(2-&gt;8)](n) + CMP-N-acetyl-beta-neuraminate = [N-acetyl-alpha-D-neuraminosyl-(2-&gt;8)](n+1) + CMP + H(+)</text>
        <dbReference type="Rhea" id="RHEA:77367"/>
        <dbReference type="Rhea" id="RHEA-COMP:14315"/>
        <dbReference type="Rhea" id="RHEA-COMP:18878"/>
        <dbReference type="ChEBI" id="CHEBI:15378"/>
        <dbReference type="ChEBI" id="CHEBI:57812"/>
        <dbReference type="ChEBI" id="CHEBI:60377"/>
        <dbReference type="ChEBI" id="CHEBI:139252"/>
    </reaction>
    <physiologicalReaction direction="left-to-right" evidence="2">
        <dbReference type="Rhea" id="RHEA:77368"/>
    </physiologicalReaction>
</comment>
<comment type="subcellular location">
    <subcellularLocation>
        <location evidence="2">Golgi apparatus membrane</location>
        <topology evidence="2">Single-pass type II membrane protein</topology>
    </subcellularLocation>
    <subcellularLocation>
        <location evidence="2">Secreted</location>
    </subcellularLocation>
</comment>
<comment type="PTM">
    <text evidence="2">Autopolysialylated.</text>
</comment>
<comment type="similarity">
    <text evidence="4">Belongs to the glycosyltransferase 29 family.</text>
</comment>